<protein>
    <recommendedName>
        <fullName evidence="1">Large ribosomal subunit protein bL36</fullName>
    </recommendedName>
    <alternativeName>
        <fullName evidence="2">50S ribosomal protein L36</fullName>
    </alternativeName>
</protein>
<name>RL36_BARQU</name>
<reference key="1">
    <citation type="journal article" date="2004" name="Proc. Natl. Acad. Sci. U.S.A.">
        <title>The louse-borne human pathogen Bartonella quintana is a genomic derivative of the zoonotic agent Bartonella henselae.</title>
        <authorList>
            <person name="Alsmark U.C.M."/>
            <person name="Frank A.C."/>
            <person name="Karlberg E.O."/>
            <person name="Legault B.-A."/>
            <person name="Ardell D.H."/>
            <person name="Canbaeck B."/>
            <person name="Eriksson A.-S."/>
            <person name="Naeslund A.K."/>
            <person name="Handley S.A."/>
            <person name="Huvet M."/>
            <person name="La Scola B."/>
            <person name="Holmberg M."/>
            <person name="Andersson S.G.E."/>
        </authorList>
    </citation>
    <scope>NUCLEOTIDE SEQUENCE [LARGE SCALE GENOMIC DNA]</scope>
    <source>
        <strain>Toulouse</strain>
    </source>
</reference>
<keyword id="KW-0687">Ribonucleoprotein</keyword>
<keyword id="KW-0689">Ribosomal protein</keyword>
<proteinExistence type="inferred from homology"/>
<sequence length="41" mass="5064">MKIKNSLKALRERHRNNRMVRRKGRVYILNKTNPRFRARQG</sequence>
<organism>
    <name type="scientific">Bartonella quintana (strain Toulouse)</name>
    <name type="common">Rochalimaea quintana</name>
    <dbReference type="NCBI Taxonomy" id="283165"/>
    <lineage>
        <taxon>Bacteria</taxon>
        <taxon>Pseudomonadati</taxon>
        <taxon>Pseudomonadota</taxon>
        <taxon>Alphaproteobacteria</taxon>
        <taxon>Hyphomicrobiales</taxon>
        <taxon>Bartonellaceae</taxon>
        <taxon>Bartonella</taxon>
    </lineage>
</organism>
<feature type="chain" id="PRO_0000126151" description="Large ribosomal subunit protein bL36">
    <location>
        <begin position="1"/>
        <end position="41"/>
    </location>
</feature>
<gene>
    <name evidence="1" type="primary">rpmJ</name>
    <name type="ordered locus">BQ11310</name>
</gene>
<evidence type="ECO:0000255" key="1">
    <source>
        <dbReference type="HAMAP-Rule" id="MF_00251"/>
    </source>
</evidence>
<evidence type="ECO:0000305" key="2"/>
<dbReference type="EMBL" id="BX897700">
    <property type="protein sequence ID" value="CAF26592.1"/>
    <property type="molecule type" value="Genomic_DNA"/>
</dbReference>
<dbReference type="SMR" id="Q6FYT6"/>
<dbReference type="KEGG" id="bqu:BQ11310"/>
<dbReference type="eggNOG" id="COG0257">
    <property type="taxonomic scope" value="Bacteria"/>
</dbReference>
<dbReference type="HOGENOM" id="CLU_135723_3_2_5"/>
<dbReference type="Proteomes" id="UP000000597">
    <property type="component" value="Chromosome"/>
</dbReference>
<dbReference type="GO" id="GO:1990904">
    <property type="term" value="C:ribonucleoprotein complex"/>
    <property type="evidence" value="ECO:0007669"/>
    <property type="project" value="UniProtKB-KW"/>
</dbReference>
<dbReference type="GO" id="GO:0005840">
    <property type="term" value="C:ribosome"/>
    <property type="evidence" value="ECO:0007669"/>
    <property type="project" value="UniProtKB-KW"/>
</dbReference>
<dbReference type="GO" id="GO:0003735">
    <property type="term" value="F:structural constituent of ribosome"/>
    <property type="evidence" value="ECO:0007669"/>
    <property type="project" value="InterPro"/>
</dbReference>
<dbReference type="GO" id="GO:0006412">
    <property type="term" value="P:translation"/>
    <property type="evidence" value="ECO:0007669"/>
    <property type="project" value="UniProtKB-UniRule"/>
</dbReference>
<dbReference type="HAMAP" id="MF_00251">
    <property type="entry name" value="Ribosomal_bL36"/>
    <property type="match status" value="1"/>
</dbReference>
<dbReference type="InterPro" id="IPR000473">
    <property type="entry name" value="Ribosomal_bL36"/>
</dbReference>
<dbReference type="InterPro" id="IPR035977">
    <property type="entry name" value="Ribosomal_bL36_sp"/>
</dbReference>
<dbReference type="InterPro" id="IPR047621">
    <property type="entry name" value="Ribosomal_L36_bact"/>
</dbReference>
<dbReference type="NCBIfam" id="NF002021">
    <property type="entry name" value="PRK00831.1"/>
    <property type="match status" value="1"/>
</dbReference>
<dbReference type="PANTHER" id="PTHR47781">
    <property type="entry name" value="50S RIBOSOMAL PROTEIN L36 2"/>
    <property type="match status" value="1"/>
</dbReference>
<dbReference type="PANTHER" id="PTHR47781:SF1">
    <property type="entry name" value="LARGE RIBOSOMAL SUBUNIT PROTEIN BL36B"/>
    <property type="match status" value="1"/>
</dbReference>
<dbReference type="Pfam" id="PF00444">
    <property type="entry name" value="Ribosomal_L36"/>
    <property type="match status" value="1"/>
</dbReference>
<dbReference type="SUPFAM" id="SSF57840">
    <property type="entry name" value="Ribosomal protein L36"/>
    <property type="match status" value="1"/>
</dbReference>
<dbReference type="PROSITE" id="PS00828">
    <property type="entry name" value="RIBOSOMAL_L36"/>
    <property type="match status" value="1"/>
</dbReference>
<accession>Q6FYT6</accession>
<comment type="similarity">
    <text evidence="1">Belongs to the bacterial ribosomal protein bL36 family.</text>
</comment>